<proteinExistence type="inferred from homology"/>
<feature type="chain" id="PRO_0000338907" description="Translation initiation factor IF-1">
    <location>
        <begin position="1"/>
        <end position="71"/>
    </location>
</feature>
<feature type="domain" description="S1-like" evidence="1">
    <location>
        <begin position="1"/>
        <end position="71"/>
    </location>
</feature>
<accession>A8GTV5</accession>
<comment type="function">
    <text evidence="1">One of the essential components for the initiation of protein synthesis. Stabilizes the binding of IF-2 and IF-3 on the 30S subunit to which N-formylmethionyl-tRNA(fMet) subsequently binds. Helps modulate mRNA selection, yielding the 30S pre-initiation complex (PIC). Upon addition of the 50S ribosomal subunit IF-1, IF-2 and IF-3 are released leaving the mature 70S translation initiation complex.</text>
</comment>
<comment type="subunit">
    <text evidence="1">Component of the 30S ribosomal translation pre-initiation complex which assembles on the 30S ribosome in the order IF-2 and IF-3, IF-1 and N-formylmethionyl-tRNA(fMet); mRNA recruitment can occur at any time during PIC assembly.</text>
</comment>
<comment type="subcellular location">
    <subcellularLocation>
        <location evidence="1">Cytoplasm</location>
    </subcellularLocation>
</comment>
<comment type="similarity">
    <text evidence="1">Belongs to the IF-1 family.</text>
</comment>
<gene>
    <name evidence="1" type="primary">infA</name>
    <name type="ordered locus">A1G_06945</name>
</gene>
<name>IF1_RICRS</name>
<reference key="1">
    <citation type="submission" date="2007-09" db="EMBL/GenBank/DDBJ databases">
        <title>Complete genome sequence of Rickettsia rickettsii.</title>
        <authorList>
            <person name="Madan A."/>
            <person name="Fahey J."/>
            <person name="Helton E."/>
            <person name="Ketteman M."/>
            <person name="Madan A."/>
            <person name="Rodrigues S."/>
            <person name="Sanchez A."/>
            <person name="Dasch G."/>
            <person name="Eremeeva M."/>
        </authorList>
    </citation>
    <scope>NUCLEOTIDE SEQUENCE [LARGE SCALE GENOMIC DNA]</scope>
    <source>
        <strain>Sheila Smith</strain>
    </source>
</reference>
<protein>
    <recommendedName>
        <fullName evidence="1">Translation initiation factor IF-1</fullName>
    </recommendedName>
</protein>
<keyword id="KW-0963">Cytoplasm</keyword>
<keyword id="KW-0396">Initiation factor</keyword>
<keyword id="KW-0648">Protein biosynthesis</keyword>
<keyword id="KW-0694">RNA-binding</keyword>
<keyword id="KW-0699">rRNA-binding</keyword>
<evidence type="ECO:0000255" key="1">
    <source>
        <dbReference type="HAMAP-Rule" id="MF_00075"/>
    </source>
</evidence>
<organism>
    <name type="scientific">Rickettsia rickettsii (strain Sheila Smith)</name>
    <dbReference type="NCBI Taxonomy" id="392021"/>
    <lineage>
        <taxon>Bacteria</taxon>
        <taxon>Pseudomonadati</taxon>
        <taxon>Pseudomonadota</taxon>
        <taxon>Alphaproteobacteria</taxon>
        <taxon>Rickettsiales</taxon>
        <taxon>Rickettsiaceae</taxon>
        <taxon>Rickettsieae</taxon>
        <taxon>Rickettsia</taxon>
        <taxon>spotted fever group</taxon>
    </lineage>
</organism>
<sequence>MSKDDLIQFTGTVLELLPNATFRVKLENDHVIIAHTSGRMRKNRIRILLGDKVMVEMTPYDLTKGRVIHRH</sequence>
<dbReference type="EMBL" id="CP000848">
    <property type="protein sequence ID" value="ABV76830.1"/>
    <property type="molecule type" value="Genomic_DNA"/>
</dbReference>
<dbReference type="RefSeq" id="WP_010977828.1">
    <property type="nucleotide sequence ID" value="NC_009882.1"/>
</dbReference>
<dbReference type="SMR" id="A8GTV5"/>
<dbReference type="GeneID" id="34513760"/>
<dbReference type="GeneID" id="928419"/>
<dbReference type="KEGG" id="rri:A1G_06945"/>
<dbReference type="HOGENOM" id="CLU_151267_1_0_5"/>
<dbReference type="Proteomes" id="UP000006832">
    <property type="component" value="Chromosome"/>
</dbReference>
<dbReference type="GO" id="GO:0005829">
    <property type="term" value="C:cytosol"/>
    <property type="evidence" value="ECO:0007669"/>
    <property type="project" value="TreeGrafter"/>
</dbReference>
<dbReference type="GO" id="GO:0043022">
    <property type="term" value="F:ribosome binding"/>
    <property type="evidence" value="ECO:0007669"/>
    <property type="project" value="UniProtKB-UniRule"/>
</dbReference>
<dbReference type="GO" id="GO:0019843">
    <property type="term" value="F:rRNA binding"/>
    <property type="evidence" value="ECO:0007669"/>
    <property type="project" value="UniProtKB-UniRule"/>
</dbReference>
<dbReference type="GO" id="GO:0003743">
    <property type="term" value="F:translation initiation factor activity"/>
    <property type="evidence" value="ECO:0007669"/>
    <property type="project" value="UniProtKB-UniRule"/>
</dbReference>
<dbReference type="CDD" id="cd04451">
    <property type="entry name" value="S1_IF1"/>
    <property type="match status" value="1"/>
</dbReference>
<dbReference type="FunFam" id="2.40.50.140:FF:000002">
    <property type="entry name" value="Translation initiation factor IF-1"/>
    <property type="match status" value="1"/>
</dbReference>
<dbReference type="Gene3D" id="2.40.50.140">
    <property type="entry name" value="Nucleic acid-binding proteins"/>
    <property type="match status" value="1"/>
</dbReference>
<dbReference type="HAMAP" id="MF_00075">
    <property type="entry name" value="IF_1"/>
    <property type="match status" value="1"/>
</dbReference>
<dbReference type="InterPro" id="IPR012340">
    <property type="entry name" value="NA-bd_OB-fold"/>
</dbReference>
<dbReference type="InterPro" id="IPR006196">
    <property type="entry name" value="RNA-binding_domain_S1_IF1"/>
</dbReference>
<dbReference type="InterPro" id="IPR004368">
    <property type="entry name" value="TIF_IF1"/>
</dbReference>
<dbReference type="NCBIfam" id="TIGR00008">
    <property type="entry name" value="infA"/>
    <property type="match status" value="1"/>
</dbReference>
<dbReference type="PANTHER" id="PTHR33370">
    <property type="entry name" value="TRANSLATION INITIATION FACTOR IF-1, CHLOROPLASTIC"/>
    <property type="match status" value="1"/>
</dbReference>
<dbReference type="PANTHER" id="PTHR33370:SF1">
    <property type="entry name" value="TRANSLATION INITIATION FACTOR IF-1, CHLOROPLASTIC"/>
    <property type="match status" value="1"/>
</dbReference>
<dbReference type="Pfam" id="PF01176">
    <property type="entry name" value="eIF-1a"/>
    <property type="match status" value="1"/>
</dbReference>
<dbReference type="SUPFAM" id="SSF50249">
    <property type="entry name" value="Nucleic acid-binding proteins"/>
    <property type="match status" value="1"/>
</dbReference>
<dbReference type="PROSITE" id="PS50832">
    <property type="entry name" value="S1_IF1_TYPE"/>
    <property type="match status" value="1"/>
</dbReference>